<protein>
    <recommendedName>
        <fullName evidence="1">Glycerol-3-phosphate dehydrogenase [NAD(P)+]</fullName>
        <ecNumber evidence="1">1.1.1.94</ecNumber>
    </recommendedName>
    <alternativeName>
        <fullName evidence="1">NAD(P)(+)-dependent glycerol-3-phosphate dehydrogenase</fullName>
    </alternativeName>
    <alternativeName>
        <fullName evidence="1">NAD(P)H-dependent dihydroxyacetone-phosphate reductase</fullName>
    </alternativeName>
</protein>
<proteinExistence type="inferred from homology"/>
<name>GPDA_SHIBS</name>
<evidence type="ECO:0000255" key="1">
    <source>
        <dbReference type="HAMAP-Rule" id="MF_00394"/>
    </source>
</evidence>
<gene>
    <name evidence="1" type="primary">gpsA</name>
    <name type="ordered locus">SBO_3614</name>
</gene>
<sequence length="339" mass="36376">MNQRNASMTVIGAGSYGTALAITLARNGHEVVLWGHDPEHIATLERDRCNAAFLPDVPFPDTLHLESDLATALAASRNILVVVPSHVFGEVLRQIKPLMRPDARLVWATKGLEAETGRLLQDVAREALGDQIPLAVISGPTFAKELAAGLPTAISLASTDQTFADDLQQLLHCGKSFRVYSNPDFIGVQLGGAVKNVIAIGAGMSDGIGFGANARTALITRGLAEMSRLGAALGAEPATFMGMAGLGDLVLTCTDNQSRNRRFGMMLGQGMDVQSAQEKIGQVVEGYRNTKEVRELAHRFGVEMPITEEIYQVLYCGKNAREAALTLLGRARKDERSSH</sequence>
<accession>Q31V13</accession>
<keyword id="KW-0963">Cytoplasm</keyword>
<keyword id="KW-0444">Lipid biosynthesis</keyword>
<keyword id="KW-0443">Lipid metabolism</keyword>
<keyword id="KW-0520">NAD</keyword>
<keyword id="KW-0521">NADP</keyword>
<keyword id="KW-0547">Nucleotide-binding</keyword>
<keyword id="KW-0560">Oxidoreductase</keyword>
<keyword id="KW-0594">Phospholipid biosynthesis</keyword>
<keyword id="KW-1208">Phospholipid metabolism</keyword>
<organism>
    <name type="scientific">Shigella boydii serotype 4 (strain Sb227)</name>
    <dbReference type="NCBI Taxonomy" id="300268"/>
    <lineage>
        <taxon>Bacteria</taxon>
        <taxon>Pseudomonadati</taxon>
        <taxon>Pseudomonadota</taxon>
        <taxon>Gammaproteobacteria</taxon>
        <taxon>Enterobacterales</taxon>
        <taxon>Enterobacteriaceae</taxon>
        <taxon>Shigella</taxon>
    </lineage>
</organism>
<comment type="function">
    <text evidence="1">Catalyzes the reduction of the glycolytic intermediate dihydroxyacetone phosphate (DHAP) to sn-glycerol 3-phosphate (G3P), the key precursor for phospholipid synthesis.</text>
</comment>
<comment type="catalytic activity">
    <reaction evidence="1">
        <text>sn-glycerol 3-phosphate + NAD(+) = dihydroxyacetone phosphate + NADH + H(+)</text>
        <dbReference type="Rhea" id="RHEA:11092"/>
        <dbReference type="ChEBI" id="CHEBI:15378"/>
        <dbReference type="ChEBI" id="CHEBI:57540"/>
        <dbReference type="ChEBI" id="CHEBI:57597"/>
        <dbReference type="ChEBI" id="CHEBI:57642"/>
        <dbReference type="ChEBI" id="CHEBI:57945"/>
        <dbReference type="EC" id="1.1.1.94"/>
    </reaction>
    <physiologicalReaction direction="right-to-left" evidence="1">
        <dbReference type="Rhea" id="RHEA:11094"/>
    </physiologicalReaction>
</comment>
<comment type="catalytic activity">
    <reaction evidence="1">
        <text>sn-glycerol 3-phosphate + NADP(+) = dihydroxyacetone phosphate + NADPH + H(+)</text>
        <dbReference type="Rhea" id="RHEA:11096"/>
        <dbReference type="ChEBI" id="CHEBI:15378"/>
        <dbReference type="ChEBI" id="CHEBI:57597"/>
        <dbReference type="ChEBI" id="CHEBI:57642"/>
        <dbReference type="ChEBI" id="CHEBI:57783"/>
        <dbReference type="ChEBI" id="CHEBI:58349"/>
        <dbReference type="EC" id="1.1.1.94"/>
    </reaction>
    <physiologicalReaction direction="right-to-left" evidence="1">
        <dbReference type="Rhea" id="RHEA:11098"/>
    </physiologicalReaction>
</comment>
<comment type="pathway">
    <text evidence="1">Membrane lipid metabolism; glycerophospholipid metabolism.</text>
</comment>
<comment type="subcellular location">
    <subcellularLocation>
        <location evidence="1">Cytoplasm</location>
    </subcellularLocation>
</comment>
<comment type="similarity">
    <text evidence="1">Belongs to the NAD-dependent glycerol-3-phosphate dehydrogenase family.</text>
</comment>
<feature type="chain" id="PRO_0000255368" description="Glycerol-3-phosphate dehydrogenase [NAD(P)+]">
    <location>
        <begin position="1"/>
        <end position="339"/>
    </location>
</feature>
<feature type="active site" description="Proton acceptor" evidence="1">
    <location>
        <position position="195"/>
    </location>
</feature>
<feature type="binding site" evidence="1">
    <location>
        <position position="15"/>
    </location>
    <ligand>
        <name>NADPH</name>
        <dbReference type="ChEBI" id="CHEBI:57783"/>
    </ligand>
</feature>
<feature type="binding site" evidence="1">
    <location>
        <position position="16"/>
    </location>
    <ligand>
        <name>NADPH</name>
        <dbReference type="ChEBI" id="CHEBI:57783"/>
    </ligand>
</feature>
<feature type="binding site" evidence="1">
    <location>
        <position position="36"/>
    </location>
    <ligand>
        <name>NADPH</name>
        <dbReference type="ChEBI" id="CHEBI:57783"/>
    </ligand>
</feature>
<feature type="binding site" evidence="1">
    <location>
        <position position="110"/>
    </location>
    <ligand>
        <name>NADPH</name>
        <dbReference type="ChEBI" id="CHEBI:57783"/>
    </ligand>
</feature>
<feature type="binding site" evidence="1">
    <location>
        <position position="110"/>
    </location>
    <ligand>
        <name>sn-glycerol 3-phosphate</name>
        <dbReference type="ChEBI" id="CHEBI:57597"/>
    </ligand>
</feature>
<feature type="binding site" evidence="1">
    <location>
        <position position="139"/>
    </location>
    <ligand>
        <name>sn-glycerol 3-phosphate</name>
        <dbReference type="ChEBI" id="CHEBI:57597"/>
    </ligand>
</feature>
<feature type="binding site" evidence="1">
    <location>
        <position position="141"/>
    </location>
    <ligand>
        <name>sn-glycerol 3-phosphate</name>
        <dbReference type="ChEBI" id="CHEBI:57597"/>
    </ligand>
</feature>
<feature type="binding site" evidence="1">
    <location>
        <position position="143"/>
    </location>
    <ligand>
        <name>NADPH</name>
        <dbReference type="ChEBI" id="CHEBI:57783"/>
    </ligand>
</feature>
<feature type="binding site" evidence="1">
    <location>
        <position position="195"/>
    </location>
    <ligand>
        <name>sn-glycerol 3-phosphate</name>
        <dbReference type="ChEBI" id="CHEBI:57597"/>
    </ligand>
</feature>
<feature type="binding site" evidence="1">
    <location>
        <position position="248"/>
    </location>
    <ligand>
        <name>sn-glycerol 3-phosphate</name>
        <dbReference type="ChEBI" id="CHEBI:57597"/>
    </ligand>
</feature>
<feature type="binding site" evidence="1">
    <location>
        <position position="258"/>
    </location>
    <ligand>
        <name>sn-glycerol 3-phosphate</name>
        <dbReference type="ChEBI" id="CHEBI:57597"/>
    </ligand>
</feature>
<feature type="binding site" evidence="1">
    <location>
        <position position="259"/>
    </location>
    <ligand>
        <name>NADPH</name>
        <dbReference type="ChEBI" id="CHEBI:57783"/>
    </ligand>
</feature>
<feature type="binding site" evidence="1">
    <location>
        <position position="259"/>
    </location>
    <ligand>
        <name>sn-glycerol 3-phosphate</name>
        <dbReference type="ChEBI" id="CHEBI:57597"/>
    </ligand>
</feature>
<feature type="binding site" evidence="1">
    <location>
        <position position="260"/>
    </location>
    <ligand>
        <name>sn-glycerol 3-phosphate</name>
        <dbReference type="ChEBI" id="CHEBI:57597"/>
    </ligand>
</feature>
<feature type="binding site" evidence="1">
    <location>
        <position position="283"/>
    </location>
    <ligand>
        <name>NADPH</name>
        <dbReference type="ChEBI" id="CHEBI:57783"/>
    </ligand>
</feature>
<feature type="binding site" evidence="1">
    <location>
        <position position="285"/>
    </location>
    <ligand>
        <name>NADPH</name>
        <dbReference type="ChEBI" id="CHEBI:57783"/>
    </ligand>
</feature>
<dbReference type="EC" id="1.1.1.94" evidence="1"/>
<dbReference type="EMBL" id="CP000036">
    <property type="protein sequence ID" value="ABB68095.1"/>
    <property type="molecule type" value="Genomic_DNA"/>
</dbReference>
<dbReference type="RefSeq" id="WP_001076197.1">
    <property type="nucleotide sequence ID" value="NC_007613.1"/>
</dbReference>
<dbReference type="SMR" id="Q31V13"/>
<dbReference type="KEGG" id="sbo:SBO_3614"/>
<dbReference type="HOGENOM" id="CLU_033449_0_2_6"/>
<dbReference type="UniPathway" id="UPA00940"/>
<dbReference type="Proteomes" id="UP000007067">
    <property type="component" value="Chromosome"/>
</dbReference>
<dbReference type="GO" id="GO:0005829">
    <property type="term" value="C:cytosol"/>
    <property type="evidence" value="ECO:0007669"/>
    <property type="project" value="TreeGrafter"/>
</dbReference>
<dbReference type="GO" id="GO:0047952">
    <property type="term" value="F:glycerol-3-phosphate dehydrogenase [NAD(P)+] activity"/>
    <property type="evidence" value="ECO:0007669"/>
    <property type="project" value="UniProtKB-UniRule"/>
</dbReference>
<dbReference type="GO" id="GO:0051287">
    <property type="term" value="F:NAD binding"/>
    <property type="evidence" value="ECO:0007669"/>
    <property type="project" value="InterPro"/>
</dbReference>
<dbReference type="GO" id="GO:0005975">
    <property type="term" value="P:carbohydrate metabolic process"/>
    <property type="evidence" value="ECO:0007669"/>
    <property type="project" value="InterPro"/>
</dbReference>
<dbReference type="GO" id="GO:0046167">
    <property type="term" value="P:glycerol-3-phosphate biosynthetic process"/>
    <property type="evidence" value="ECO:0007669"/>
    <property type="project" value="UniProtKB-UniRule"/>
</dbReference>
<dbReference type="GO" id="GO:0046168">
    <property type="term" value="P:glycerol-3-phosphate catabolic process"/>
    <property type="evidence" value="ECO:0007669"/>
    <property type="project" value="InterPro"/>
</dbReference>
<dbReference type="GO" id="GO:0046474">
    <property type="term" value="P:glycerophospholipid biosynthetic process"/>
    <property type="evidence" value="ECO:0007669"/>
    <property type="project" value="TreeGrafter"/>
</dbReference>
<dbReference type="FunFam" id="1.10.1040.10:FF:000001">
    <property type="entry name" value="Glycerol-3-phosphate dehydrogenase [NAD(P)+]"/>
    <property type="match status" value="1"/>
</dbReference>
<dbReference type="FunFam" id="3.40.50.720:FF:000019">
    <property type="entry name" value="Glycerol-3-phosphate dehydrogenase [NAD(P)+]"/>
    <property type="match status" value="1"/>
</dbReference>
<dbReference type="Gene3D" id="1.10.1040.10">
    <property type="entry name" value="N-(1-d-carboxylethyl)-l-norvaline Dehydrogenase, domain 2"/>
    <property type="match status" value="1"/>
</dbReference>
<dbReference type="Gene3D" id="3.40.50.720">
    <property type="entry name" value="NAD(P)-binding Rossmann-like Domain"/>
    <property type="match status" value="1"/>
</dbReference>
<dbReference type="HAMAP" id="MF_00394">
    <property type="entry name" value="NAD_Glyc3P_dehydrog"/>
    <property type="match status" value="1"/>
</dbReference>
<dbReference type="InterPro" id="IPR008927">
    <property type="entry name" value="6-PGluconate_DH-like_C_sf"/>
</dbReference>
<dbReference type="InterPro" id="IPR013328">
    <property type="entry name" value="6PGD_dom2"/>
</dbReference>
<dbReference type="InterPro" id="IPR006168">
    <property type="entry name" value="G3P_DH_NAD-dep"/>
</dbReference>
<dbReference type="InterPro" id="IPR006109">
    <property type="entry name" value="G3P_DH_NAD-dep_C"/>
</dbReference>
<dbReference type="InterPro" id="IPR011128">
    <property type="entry name" value="G3P_DH_NAD-dep_N"/>
</dbReference>
<dbReference type="InterPro" id="IPR036291">
    <property type="entry name" value="NAD(P)-bd_dom_sf"/>
</dbReference>
<dbReference type="NCBIfam" id="NF000939">
    <property type="entry name" value="PRK00094.1-1"/>
    <property type="match status" value="1"/>
</dbReference>
<dbReference type="NCBIfam" id="NF000940">
    <property type="entry name" value="PRK00094.1-2"/>
    <property type="match status" value="1"/>
</dbReference>
<dbReference type="NCBIfam" id="NF000942">
    <property type="entry name" value="PRK00094.1-4"/>
    <property type="match status" value="1"/>
</dbReference>
<dbReference type="PANTHER" id="PTHR11728">
    <property type="entry name" value="GLYCEROL-3-PHOSPHATE DEHYDROGENASE"/>
    <property type="match status" value="1"/>
</dbReference>
<dbReference type="PANTHER" id="PTHR11728:SF1">
    <property type="entry name" value="GLYCEROL-3-PHOSPHATE DEHYDROGENASE [NAD(+)] 2, CHLOROPLASTIC"/>
    <property type="match status" value="1"/>
</dbReference>
<dbReference type="Pfam" id="PF07479">
    <property type="entry name" value="NAD_Gly3P_dh_C"/>
    <property type="match status" value="1"/>
</dbReference>
<dbReference type="Pfam" id="PF01210">
    <property type="entry name" value="NAD_Gly3P_dh_N"/>
    <property type="match status" value="1"/>
</dbReference>
<dbReference type="PIRSF" id="PIRSF000114">
    <property type="entry name" value="Glycerol-3-P_dh"/>
    <property type="match status" value="1"/>
</dbReference>
<dbReference type="PRINTS" id="PR00077">
    <property type="entry name" value="GPDHDRGNASE"/>
</dbReference>
<dbReference type="SUPFAM" id="SSF48179">
    <property type="entry name" value="6-phosphogluconate dehydrogenase C-terminal domain-like"/>
    <property type="match status" value="1"/>
</dbReference>
<dbReference type="SUPFAM" id="SSF51735">
    <property type="entry name" value="NAD(P)-binding Rossmann-fold domains"/>
    <property type="match status" value="1"/>
</dbReference>
<dbReference type="PROSITE" id="PS00957">
    <property type="entry name" value="NAD_G3PDH"/>
    <property type="match status" value="1"/>
</dbReference>
<reference key="1">
    <citation type="journal article" date="2005" name="Nucleic Acids Res.">
        <title>Genome dynamics and diversity of Shigella species, the etiologic agents of bacillary dysentery.</title>
        <authorList>
            <person name="Yang F."/>
            <person name="Yang J."/>
            <person name="Zhang X."/>
            <person name="Chen L."/>
            <person name="Jiang Y."/>
            <person name="Yan Y."/>
            <person name="Tang X."/>
            <person name="Wang J."/>
            <person name="Xiong Z."/>
            <person name="Dong J."/>
            <person name="Xue Y."/>
            <person name="Zhu Y."/>
            <person name="Xu X."/>
            <person name="Sun L."/>
            <person name="Chen S."/>
            <person name="Nie H."/>
            <person name="Peng J."/>
            <person name="Xu J."/>
            <person name="Wang Y."/>
            <person name="Yuan Z."/>
            <person name="Wen Y."/>
            <person name="Yao Z."/>
            <person name="Shen Y."/>
            <person name="Qiang B."/>
            <person name="Hou Y."/>
            <person name="Yu J."/>
            <person name="Jin Q."/>
        </authorList>
    </citation>
    <scope>NUCLEOTIDE SEQUENCE [LARGE SCALE GENOMIC DNA]</scope>
    <source>
        <strain>Sb227</strain>
    </source>
</reference>